<proteinExistence type="evidence at transcript level"/>
<evidence type="ECO:0000250" key="1"/>
<evidence type="ECO:0000255" key="2"/>
<evidence type="ECO:0000255" key="3">
    <source>
        <dbReference type="PROSITE-ProRule" id="PRU00199"/>
    </source>
</evidence>
<evidence type="ECO:0000255" key="4">
    <source>
        <dbReference type="PROSITE-ProRule" id="PRU10003"/>
    </source>
</evidence>
<evidence type="ECO:0000256" key="5">
    <source>
        <dbReference type="SAM" id="MobiDB-lite"/>
    </source>
</evidence>
<evidence type="ECO:0000269" key="6">
    <source>
    </source>
</evidence>
<evidence type="ECO:0000269" key="7">
    <source>
    </source>
</evidence>
<evidence type="ECO:0000305" key="8"/>
<dbReference type="EC" id="1.1.1.34"/>
<dbReference type="EMBL" id="M21329">
    <property type="protein sequence ID" value="AAA28608.1"/>
    <property type="molecule type" value="Genomic_DNA"/>
</dbReference>
<dbReference type="EMBL" id="AE014297">
    <property type="protein sequence ID" value="AAF56175.1"/>
    <property type="molecule type" value="Genomic_DNA"/>
</dbReference>
<dbReference type="EMBL" id="AE014297">
    <property type="protein sequence ID" value="AAS65198.1"/>
    <property type="molecule type" value="Genomic_DNA"/>
</dbReference>
<dbReference type="PIR" id="S32572">
    <property type="entry name" value="S32572"/>
</dbReference>
<dbReference type="RefSeq" id="NP_732900.1">
    <property type="nucleotide sequence ID" value="NM_170089.2"/>
</dbReference>
<dbReference type="SMR" id="P14773"/>
<dbReference type="BioGRID" id="67741">
    <property type="interactions" value="9"/>
</dbReference>
<dbReference type="FunCoup" id="P14773">
    <property type="interactions" value="556"/>
</dbReference>
<dbReference type="IntAct" id="P14773">
    <property type="interactions" value="1"/>
</dbReference>
<dbReference type="STRING" id="7227.FBpp0083842"/>
<dbReference type="GlyCosmos" id="P14773">
    <property type="glycosylation" value="9 sites, No reported glycans"/>
</dbReference>
<dbReference type="GlyGen" id="P14773">
    <property type="glycosylation" value="9 sites"/>
</dbReference>
<dbReference type="PaxDb" id="7227-FBpp0083842"/>
<dbReference type="EnsemblMetazoa" id="FBtr0084450">
    <property type="protein sequence ID" value="FBpp0083842"/>
    <property type="gene ID" value="FBgn0263782"/>
</dbReference>
<dbReference type="GeneID" id="42803"/>
<dbReference type="KEGG" id="dme:Dmel_CG10367"/>
<dbReference type="AGR" id="FB:FBgn0263782"/>
<dbReference type="CTD" id="3156"/>
<dbReference type="FlyBase" id="FBgn0263782">
    <property type="gene designation" value="Hmgcr"/>
</dbReference>
<dbReference type="VEuPathDB" id="VectorBase:FBgn0263782"/>
<dbReference type="eggNOG" id="KOG2480">
    <property type="taxonomic scope" value="Eukaryota"/>
</dbReference>
<dbReference type="GeneTree" id="ENSGT00940000155305"/>
<dbReference type="HOGENOM" id="CLU_001734_0_1_1"/>
<dbReference type="InParanoid" id="P14773"/>
<dbReference type="OMA" id="DCHIAMD"/>
<dbReference type="OrthoDB" id="310654at2759"/>
<dbReference type="PhylomeDB" id="P14773"/>
<dbReference type="Reactome" id="R-DME-191273">
    <property type="pathway name" value="Cholesterol biosynthesis"/>
</dbReference>
<dbReference type="UniPathway" id="UPA00058">
    <property type="reaction ID" value="UER00103"/>
</dbReference>
<dbReference type="BioGRID-ORCS" id="42803">
    <property type="hits" value="0 hits in 3 CRISPR screens"/>
</dbReference>
<dbReference type="GenomeRNAi" id="42803"/>
<dbReference type="PRO" id="PR:P14773"/>
<dbReference type="Proteomes" id="UP000000803">
    <property type="component" value="Chromosome 3R"/>
</dbReference>
<dbReference type="Bgee" id="FBgn0263782">
    <property type="expression patterns" value="Expressed in fat body/gonad primordium (Drosophila) and 76 other cell types or tissues"/>
</dbReference>
<dbReference type="ExpressionAtlas" id="P14773">
    <property type="expression patterns" value="baseline and differential"/>
</dbReference>
<dbReference type="GO" id="GO:0005789">
    <property type="term" value="C:endoplasmic reticulum membrane"/>
    <property type="evidence" value="ECO:0000318"/>
    <property type="project" value="GO_Central"/>
</dbReference>
<dbReference type="GO" id="GO:0005778">
    <property type="term" value="C:peroxisomal membrane"/>
    <property type="evidence" value="ECO:0000250"/>
    <property type="project" value="FlyBase"/>
</dbReference>
<dbReference type="GO" id="GO:0004420">
    <property type="term" value="F:hydroxymethylglutaryl-CoA reductase (NADPH) activity"/>
    <property type="evidence" value="ECO:0000318"/>
    <property type="project" value="GO_Central"/>
</dbReference>
<dbReference type="GO" id="GO:0050661">
    <property type="term" value="F:NADP binding"/>
    <property type="evidence" value="ECO:0007669"/>
    <property type="project" value="InterPro"/>
</dbReference>
<dbReference type="GO" id="GO:0015936">
    <property type="term" value="P:coenzyme A metabolic process"/>
    <property type="evidence" value="ECO:0007669"/>
    <property type="project" value="InterPro"/>
</dbReference>
<dbReference type="GO" id="GO:0018990">
    <property type="term" value="P:ecdysis, chitin-based cuticle"/>
    <property type="evidence" value="ECO:0000315"/>
    <property type="project" value="FlyBase"/>
</dbReference>
<dbReference type="GO" id="GO:0035050">
    <property type="term" value="P:embryonic heart tube development"/>
    <property type="evidence" value="ECO:0000315"/>
    <property type="project" value="FlyBase"/>
</dbReference>
<dbReference type="GO" id="GO:0035232">
    <property type="term" value="P:germ cell attraction"/>
    <property type="evidence" value="ECO:0000314"/>
    <property type="project" value="FlyBase"/>
</dbReference>
<dbReference type="GO" id="GO:0008354">
    <property type="term" value="P:germ cell migration"/>
    <property type="evidence" value="ECO:0000315"/>
    <property type="project" value="UniProtKB"/>
</dbReference>
<dbReference type="GO" id="GO:0008406">
    <property type="term" value="P:gonad development"/>
    <property type="evidence" value="ECO:0000304"/>
    <property type="project" value="FlyBase"/>
</dbReference>
<dbReference type="GO" id="GO:0008299">
    <property type="term" value="P:isoprenoid biosynthetic process"/>
    <property type="evidence" value="ECO:0000318"/>
    <property type="project" value="GO_Central"/>
</dbReference>
<dbReference type="GO" id="GO:0007626">
    <property type="term" value="P:locomotory behavior"/>
    <property type="evidence" value="ECO:0000315"/>
    <property type="project" value="FlyBase"/>
</dbReference>
<dbReference type="GO" id="GO:0046579">
    <property type="term" value="P:positive regulation of Ras protein signal transduction"/>
    <property type="evidence" value="ECO:0007003"/>
    <property type="project" value="FlyBase"/>
</dbReference>
<dbReference type="GO" id="GO:0016126">
    <property type="term" value="P:sterol biosynthetic process"/>
    <property type="evidence" value="ECO:0000318"/>
    <property type="project" value="GO_Central"/>
</dbReference>
<dbReference type="CDD" id="cd00643">
    <property type="entry name" value="HMG-CoA_reductase_classI"/>
    <property type="match status" value="1"/>
</dbReference>
<dbReference type="FunFam" id="1.10.3270.10:FF:000001">
    <property type="entry name" value="3-hydroxy-3-methylglutaryl coenzyme A reductase"/>
    <property type="match status" value="1"/>
</dbReference>
<dbReference type="FunFam" id="3.30.70.420:FF:000001">
    <property type="entry name" value="3-hydroxy-3-methylglutaryl coenzyme A reductase"/>
    <property type="match status" value="1"/>
</dbReference>
<dbReference type="FunFam" id="3.90.770.10:FF:000001">
    <property type="entry name" value="3-hydroxy-3-methylglutaryl coenzyme A reductase"/>
    <property type="match status" value="1"/>
</dbReference>
<dbReference type="Gene3D" id="3.90.770.10">
    <property type="entry name" value="3-hydroxy-3-methylglutaryl-coenzyme A Reductase, Chain A, domain 2"/>
    <property type="match status" value="1"/>
</dbReference>
<dbReference type="Gene3D" id="1.10.3270.10">
    <property type="entry name" value="HMGR, N-terminal domain"/>
    <property type="match status" value="1"/>
</dbReference>
<dbReference type="Gene3D" id="3.30.70.420">
    <property type="entry name" value="Hydroxymethylglutaryl-CoA reductase, class I/II, NAD/NADP-binding domain"/>
    <property type="match status" value="1"/>
</dbReference>
<dbReference type="InterPro" id="IPR002202">
    <property type="entry name" value="HMG_CoA_Rdtase"/>
</dbReference>
<dbReference type="InterPro" id="IPR023074">
    <property type="entry name" value="HMG_CoA_Rdtase_cat_sf"/>
</dbReference>
<dbReference type="InterPro" id="IPR023076">
    <property type="entry name" value="HMG_CoA_Rdtase_CS"/>
</dbReference>
<dbReference type="InterPro" id="IPR004554">
    <property type="entry name" value="HMG_CoA_Rdtase_eu_arc"/>
</dbReference>
<dbReference type="InterPro" id="IPR004816">
    <property type="entry name" value="HMG_CoA_Rdtase_metazoan"/>
</dbReference>
<dbReference type="InterPro" id="IPR023282">
    <property type="entry name" value="HMG_CoA_Rdtase_N"/>
</dbReference>
<dbReference type="InterPro" id="IPR009023">
    <property type="entry name" value="HMG_CoA_Rdtase_NAD(P)-bd_sf"/>
</dbReference>
<dbReference type="InterPro" id="IPR009029">
    <property type="entry name" value="HMG_CoA_Rdtase_sub-bd_dom_sf"/>
</dbReference>
<dbReference type="InterPro" id="IPR053958">
    <property type="entry name" value="HMGCR/SNAP/NPC1-like_SSD"/>
</dbReference>
<dbReference type="InterPro" id="IPR000731">
    <property type="entry name" value="SSD"/>
</dbReference>
<dbReference type="NCBIfam" id="TIGR00920">
    <property type="entry name" value="2A060605"/>
    <property type="match status" value="1"/>
</dbReference>
<dbReference type="NCBIfam" id="TIGR00533">
    <property type="entry name" value="HMG_CoA_R_NADP"/>
    <property type="match status" value="1"/>
</dbReference>
<dbReference type="PANTHER" id="PTHR10572">
    <property type="entry name" value="3-HYDROXY-3-METHYLGLUTARYL-COENZYME A REDUCTASE"/>
    <property type="match status" value="1"/>
</dbReference>
<dbReference type="PANTHER" id="PTHR10572:SF24">
    <property type="entry name" value="3-HYDROXY-3-METHYLGLUTARYL-COENZYME A REDUCTASE"/>
    <property type="match status" value="1"/>
</dbReference>
<dbReference type="Pfam" id="PF00368">
    <property type="entry name" value="HMG-CoA_red"/>
    <property type="match status" value="1"/>
</dbReference>
<dbReference type="Pfam" id="PF12349">
    <property type="entry name" value="Sterol-sensing"/>
    <property type="match status" value="1"/>
</dbReference>
<dbReference type="PRINTS" id="PR00071">
    <property type="entry name" value="HMGCOARDTASE"/>
</dbReference>
<dbReference type="SUPFAM" id="SSF55035">
    <property type="entry name" value="NAD-binding domain of HMG-CoA reductase"/>
    <property type="match status" value="1"/>
</dbReference>
<dbReference type="SUPFAM" id="SSF56542">
    <property type="entry name" value="Substrate-binding domain of HMG-CoA reductase"/>
    <property type="match status" value="1"/>
</dbReference>
<dbReference type="PROSITE" id="PS00066">
    <property type="entry name" value="HMG_COA_REDUCTASE_1"/>
    <property type="match status" value="1"/>
</dbReference>
<dbReference type="PROSITE" id="PS00318">
    <property type="entry name" value="HMG_COA_REDUCTASE_2"/>
    <property type="match status" value="1"/>
</dbReference>
<dbReference type="PROSITE" id="PS01192">
    <property type="entry name" value="HMG_COA_REDUCTASE_3"/>
    <property type="match status" value="1"/>
</dbReference>
<dbReference type="PROSITE" id="PS50065">
    <property type="entry name" value="HMG_COA_REDUCTASE_4"/>
    <property type="match status" value="1"/>
</dbReference>
<dbReference type="PROSITE" id="PS50156">
    <property type="entry name" value="SSD"/>
    <property type="match status" value="1"/>
</dbReference>
<accession>P14773</accession>
<accession>A4V3A8</accession>
<accession>Q9VCI8</accession>
<comment type="function">
    <text evidence="7">Synthesis of mevalonate for the production of non-sterol isoprenoids, which are essential for growth differentiation. Provides spatial information during embryogenesis to guide migrating primordial germ cells (the pole cells) from the ectoderm to the mesoderm. Also required for association of the pole cells with the gonadal mesoderm.</text>
</comment>
<comment type="catalytic activity">
    <reaction evidence="4">
        <text>(R)-mevalonate + 2 NADP(+) + CoA = (3S)-3-hydroxy-3-methylglutaryl-CoA + 2 NADPH + 2 H(+)</text>
        <dbReference type="Rhea" id="RHEA:15989"/>
        <dbReference type="ChEBI" id="CHEBI:15378"/>
        <dbReference type="ChEBI" id="CHEBI:36464"/>
        <dbReference type="ChEBI" id="CHEBI:43074"/>
        <dbReference type="ChEBI" id="CHEBI:57287"/>
        <dbReference type="ChEBI" id="CHEBI:57783"/>
        <dbReference type="ChEBI" id="CHEBI:58349"/>
        <dbReference type="EC" id="1.1.1.34"/>
    </reaction>
</comment>
<comment type="activity regulation">
    <text evidence="6">The activity of HMG-CoA-reductase is suppressed by exogenous mevalonate.</text>
</comment>
<comment type="pathway">
    <text>Metabolic intermediate biosynthesis; (R)-mevalonate biosynthesis; (R)-mevalonate from acetyl-CoA: step 3/3.</text>
</comment>
<comment type="subcellular location">
    <subcellularLocation>
        <location>Endoplasmic reticulum membrane</location>
        <topology>Multi-pass membrane protein</topology>
    </subcellularLocation>
</comment>
<comment type="tissue specificity">
    <text evidence="7">Highly expressed in embryonic gonadal mesoderm, where expression is initially broad, and then becomes restricted to a segmental pattern at stage 11. Expression is then further restricted to a cluster of cells in each of parasegments 10, 11 and 12, corresponding to the developing gonadal mesoderm. Not expressed in pole cells.</text>
</comment>
<comment type="similarity">
    <text evidence="8">Belongs to the HMG-CoA reductase family.</text>
</comment>
<keyword id="KW-0256">Endoplasmic reticulum</keyword>
<keyword id="KW-0325">Glycoprotein</keyword>
<keyword id="KW-0414">Isoprene biosynthesis</keyword>
<keyword id="KW-0472">Membrane</keyword>
<keyword id="KW-0521">NADP</keyword>
<keyword id="KW-0560">Oxidoreductase</keyword>
<keyword id="KW-1185">Reference proteome</keyword>
<keyword id="KW-0812">Transmembrane</keyword>
<keyword id="KW-1133">Transmembrane helix</keyword>
<protein>
    <recommendedName>
        <fullName>3-hydroxy-3-methylglutaryl-coenzyme A reductase</fullName>
        <shortName>HMG-CoA reductase</shortName>
        <ecNumber>1.1.1.34</ecNumber>
    </recommendedName>
</protein>
<name>HMDH_DROME</name>
<organism>
    <name type="scientific">Drosophila melanogaster</name>
    <name type="common">Fruit fly</name>
    <dbReference type="NCBI Taxonomy" id="7227"/>
    <lineage>
        <taxon>Eukaryota</taxon>
        <taxon>Metazoa</taxon>
        <taxon>Ecdysozoa</taxon>
        <taxon>Arthropoda</taxon>
        <taxon>Hexapoda</taxon>
        <taxon>Insecta</taxon>
        <taxon>Pterygota</taxon>
        <taxon>Neoptera</taxon>
        <taxon>Endopterygota</taxon>
        <taxon>Diptera</taxon>
        <taxon>Brachycera</taxon>
        <taxon>Muscomorpha</taxon>
        <taxon>Ephydroidea</taxon>
        <taxon>Drosophilidae</taxon>
        <taxon>Drosophila</taxon>
        <taxon>Sophophora</taxon>
    </lineage>
</organism>
<feature type="chain" id="PRO_0000114431" description="3-hydroxy-3-methylglutaryl-coenzyme A reductase">
    <location>
        <begin position="1"/>
        <end position="920"/>
    </location>
</feature>
<feature type="transmembrane region" description="Helical" evidence="2">
    <location>
        <begin position="12"/>
        <end position="32"/>
    </location>
</feature>
<feature type="transmembrane region" description="Helical" evidence="2">
    <location>
        <begin position="107"/>
        <end position="129"/>
    </location>
</feature>
<feature type="transmembrane region" description="Helical" evidence="2">
    <location>
        <begin position="136"/>
        <end position="156"/>
    </location>
</feature>
<feature type="transmembrane region" description="Helical" evidence="2">
    <location>
        <begin position="170"/>
        <end position="190"/>
    </location>
</feature>
<feature type="transmembrane region" description="Helical" evidence="2">
    <location>
        <begin position="208"/>
        <end position="228"/>
    </location>
</feature>
<feature type="transmembrane region" description="Helical" evidence="2">
    <location>
        <begin position="237"/>
        <end position="257"/>
    </location>
</feature>
<feature type="transmembrane region" description="Helical" evidence="2">
    <location>
        <begin position="364"/>
        <end position="384"/>
    </location>
</feature>
<feature type="domain" description="SSD" evidence="3">
    <location>
        <begin position="106"/>
        <end position="263"/>
    </location>
</feature>
<feature type="region of interest" description="Disordered" evidence="5">
    <location>
        <begin position="62"/>
        <end position="85"/>
    </location>
</feature>
<feature type="region of interest" description="Linker">
    <location>
        <begin position="385"/>
        <end position="498"/>
    </location>
</feature>
<feature type="region of interest" description="Catalytic">
    <location>
        <begin position="499"/>
        <end position="829"/>
    </location>
</feature>
<feature type="compositionally biased region" description="Polar residues" evidence="5">
    <location>
        <begin position="71"/>
        <end position="82"/>
    </location>
</feature>
<feature type="active site" description="Charge relay system" evidence="1">
    <location>
        <position position="586"/>
    </location>
</feature>
<feature type="active site" description="Charge relay system" evidence="1">
    <location>
        <position position="717"/>
    </location>
</feature>
<feature type="active site" description="Charge relay system" evidence="1">
    <location>
        <position position="793"/>
    </location>
</feature>
<feature type="active site" description="Proton donor" evidence="4">
    <location>
        <position position="892"/>
    </location>
</feature>
<feature type="glycosylation site" description="N-linked (GlcNAc...) asparagine" evidence="2">
    <location>
        <position position="37"/>
    </location>
</feature>
<feature type="glycosylation site" description="N-linked (GlcNAc...) asparagine" evidence="2">
    <location>
        <position position="342"/>
    </location>
</feature>
<feature type="glycosylation site" description="N-linked (GlcNAc...) asparagine" evidence="2">
    <location>
        <position position="346"/>
    </location>
</feature>
<feature type="glycosylation site" description="N-linked (GlcNAc...) asparagine" evidence="2">
    <location>
        <position position="443"/>
    </location>
</feature>
<feature type="glycosylation site" description="N-linked (GlcNAc...) asparagine" evidence="2">
    <location>
        <position position="475"/>
    </location>
</feature>
<feature type="glycosylation site" description="N-linked (GlcNAc...) asparagine" evidence="2">
    <location>
        <position position="797"/>
    </location>
</feature>
<feature type="glycosylation site" description="N-linked (GlcNAc...) asparagine" evidence="2">
    <location>
        <position position="802"/>
    </location>
</feature>
<feature type="glycosylation site" description="N-linked (GlcNAc...) asparagine" evidence="2">
    <location>
        <position position="896"/>
    </location>
</feature>
<feature type="glycosylation site" description="N-linked (GlcNAc...) asparagine" evidence="2">
    <location>
        <position position="910"/>
    </location>
</feature>
<feature type="sequence conflict" description="In Ref. 1; AAA28608." evidence="8" ref="1">
    <original>R</original>
    <variation>P</variation>
    <location>
        <position position="4"/>
    </location>
</feature>
<feature type="sequence conflict" description="In Ref. 1; AAA28608." evidence="8" ref="1">
    <original>HGE</original>
    <variation>TQ</variation>
    <location>
        <begin position="9"/>
        <end position="11"/>
    </location>
</feature>
<feature type="sequence conflict" description="In Ref. 1; AAA28608." evidence="8" ref="1">
    <original>TVDKNNTLDASSGLGTA</original>
    <variation>NGGQEQYPGCEQRIGHS</variation>
    <location>
        <begin position="33"/>
        <end position="49"/>
    </location>
</feature>
<feature type="sequence conflict" description="In Ref. 1; AAA28608." evidence="8" ref="1">
    <location>
        <position position="58"/>
    </location>
</feature>
<feature type="sequence conflict" description="In Ref. 1; AAA28608." evidence="8" ref="1">
    <original>AQLALS</original>
    <variation>RSGAM</variation>
    <location>
        <begin position="186"/>
        <end position="191"/>
    </location>
</feature>
<feature type="sequence conflict" description="In Ref. 1; AAA28608." evidence="8" ref="1">
    <original>E</original>
    <variation>V</variation>
    <location>
        <position position="220"/>
    </location>
</feature>
<feature type="sequence conflict" description="In Ref. 1; AAA28608." evidence="8" ref="1">
    <original>L</original>
    <variation>P</variation>
    <location>
        <position position="286"/>
    </location>
</feature>
<feature type="sequence conflict" description="In Ref. 1; AAA28608." evidence="8" ref="1">
    <original>VAFSGSDYDA</original>
    <variation>EVSPAATTM</variation>
    <location>
        <begin position="321"/>
        <end position="330"/>
    </location>
</feature>
<feature type="sequence conflict" description="In Ref. 1; AAA28608." evidence="8" ref="1">
    <original>A</original>
    <variation>E</variation>
    <location>
        <position position="403"/>
    </location>
</feature>
<feature type="sequence conflict" description="In Ref. 1; AAA28608." evidence="8" ref="1">
    <original>A</original>
    <variation>R</variation>
    <location>
        <position position="680"/>
    </location>
</feature>
<feature type="sequence conflict" description="In Ref. 1; AAA28608." evidence="8" ref="1">
    <original>GAEMALRRIQLQ</original>
    <variation>ALRWPFAEFTLH</variation>
    <location>
        <begin position="689"/>
        <end position="700"/>
    </location>
</feature>
<sequence length="920" mass="98317">MIGRLFRAHGEFCASHPWEVIVALLTITACMLTVDKNNTLDASSGLGTATASAAAAGGSGSGAGSGASGTIPPSSMGGSATSSRHRPCHGWSQSCDGLEAEYNAADVILMTIVRCTAVLYCYYQFCSLHRLGSKYVLGIAGLFTVFSSFIFTTAIIKFLGSDISELKDALFFLLLVIDLSNSGRLAQLALSGSNQAEVTQNIARGLELLGPAISLDTIVEVLLVGVGTLSGVQRLEVLCMFAVLSVLVNYVVFMTFYPACLSLIFDLSRSGVDMSVVREKAKGSLLLKSLTEEEQKANPVLQRVKLIMTTGLMAVHIYSRVAFSGSDYDAVDKTLTPTLSLNVSNNRTESGEIADIIIKWLTMSADHIVISIVLIALVVKFICFDNRDPLPDQLRQSGPVAIAAKASQTTPIDEEHVEQEKDTENSAAVRTLLFTIEDQSSANASTQTDLLPLRHRLVGPIKPPRPVQECLDILNSTEEGSGPAALSDEEIVSIVHAGGTHCPLHKIESVLDDPERGVRIRRQIIGSRAKMPVGRLDVLPYEHFDYRKVLNACCENVLGYVPIPVGYAGPLLLDGETYYVPMATTEGALVASTNRGCKALSVRGVRSVVEDVGMTRAPCVRFPSVARAAEAKSWIENDENYRVVKTEFDSTSRFGRLKDCHIAMDGPQLYIRFVAITGDAMGMNMVSKGAEMALRRIQLQFPDMQIISLSGNFCCDKKPAAINWIKGRGKRVVTECTISAATLRSVLKTDAKTLVECNKLKNMGGSAMAGSIGGNNAHAANMVTAVFLATGQDPAQNVTSSNCSTAMECWAENSEDLYMTCTMPSLEVGTVGGGTGLPGQSACLEMLGVRGAHATRPGDNAKKLAQIVCATVMAGELSLMAALVNSDLVKSHMRHNRSSIAVNSANNPLNVTVSSCSTIS</sequence>
<reference key="1">
    <citation type="journal article" date="1988" name="Mol. Cell. Biol.">
        <title>Developmental and metabolic regulation of the Drosophila melanogaster 3-hydroxy-3-methylglutaryl coenzyme A reductase.</title>
        <authorList>
            <person name="Gertler F.B."/>
            <person name="Chiu C.-Y."/>
            <person name="Richter-Mann L."/>
            <person name="Chin D.J."/>
        </authorList>
    </citation>
    <scope>NUCLEOTIDE SEQUENCE [GENOMIC DNA]</scope>
    <scope>ACTIVITY REGULATION</scope>
</reference>
<reference key="2">
    <citation type="journal article" date="2000" name="Science">
        <title>The genome sequence of Drosophila melanogaster.</title>
        <authorList>
            <person name="Adams M.D."/>
            <person name="Celniker S.E."/>
            <person name="Holt R.A."/>
            <person name="Evans C.A."/>
            <person name="Gocayne J.D."/>
            <person name="Amanatides P.G."/>
            <person name="Scherer S.E."/>
            <person name="Li P.W."/>
            <person name="Hoskins R.A."/>
            <person name="Galle R.F."/>
            <person name="George R.A."/>
            <person name="Lewis S.E."/>
            <person name="Richards S."/>
            <person name="Ashburner M."/>
            <person name="Henderson S.N."/>
            <person name="Sutton G.G."/>
            <person name="Wortman J.R."/>
            <person name="Yandell M.D."/>
            <person name="Zhang Q."/>
            <person name="Chen L.X."/>
            <person name="Brandon R.C."/>
            <person name="Rogers Y.-H.C."/>
            <person name="Blazej R.G."/>
            <person name="Champe M."/>
            <person name="Pfeiffer B.D."/>
            <person name="Wan K.H."/>
            <person name="Doyle C."/>
            <person name="Baxter E.G."/>
            <person name="Helt G."/>
            <person name="Nelson C.R."/>
            <person name="Miklos G.L.G."/>
            <person name="Abril J.F."/>
            <person name="Agbayani A."/>
            <person name="An H.-J."/>
            <person name="Andrews-Pfannkoch C."/>
            <person name="Baldwin D."/>
            <person name="Ballew R.M."/>
            <person name="Basu A."/>
            <person name="Baxendale J."/>
            <person name="Bayraktaroglu L."/>
            <person name="Beasley E.M."/>
            <person name="Beeson K.Y."/>
            <person name="Benos P.V."/>
            <person name="Berman B.P."/>
            <person name="Bhandari D."/>
            <person name="Bolshakov S."/>
            <person name="Borkova D."/>
            <person name="Botchan M.R."/>
            <person name="Bouck J."/>
            <person name="Brokstein P."/>
            <person name="Brottier P."/>
            <person name="Burtis K.C."/>
            <person name="Busam D.A."/>
            <person name="Butler H."/>
            <person name="Cadieu E."/>
            <person name="Center A."/>
            <person name="Chandra I."/>
            <person name="Cherry J.M."/>
            <person name="Cawley S."/>
            <person name="Dahlke C."/>
            <person name="Davenport L.B."/>
            <person name="Davies P."/>
            <person name="de Pablos B."/>
            <person name="Delcher A."/>
            <person name="Deng Z."/>
            <person name="Mays A.D."/>
            <person name="Dew I."/>
            <person name="Dietz S.M."/>
            <person name="Dodson K."/>
            <person name="Doup L.E."/>
            <person name="Downes M."/>
            <person name="Dugan-Rocha S."/>
            <person name="Dunkov B.C."/>
            <person name="Dunn P."/>
            <person name="Durbin K.J."/>
            <person name="Evangelista C.C."/>
            <person name="Ferraz C."/>
            <person name="Ferriera S."/>
            <person name="Fleischmann W."/>
            <person name="Fosler C."/>
            <person name="Gabrielian A.E."/>
            <person name="Garg N.S."/>
            <person name="Gelbart W.M."/>
            <person name="Glasser K."/>
            <person name="Glodek A."/>
            <person name="Gong F."/>
            <person name="Gorrell J.H."/>
            <person name="Gu Z."/>
            <person name="Guan P."/>
            <person name="Harris M."/>
            <person name="Harris N.L."/>
            <person name="Harvey D.A."/>
            <person name="Heiman T.J."/>
            <person name="Hernandez J.R."/>
            <person name="Houck J."/>
            <person name="Hostin D."/>
            <person name="Houston K.A."/>
            <person name="Howland T.J."/>
            <person name="Wei M.-H."/>
            <person name="Ibegwam C."/>
            <person name="Jalali M."/>
            <person name="Kalush F."/>
            <person name="Karpen G.H."/>
            <person name="Ke Z."/>
            <person name="Kennison J.A."/>
            <person name="Ketchum K.A."/>
            <person name="Kimmel B.E."/>
            <person name="Kodira C.D."/>
            <person name="Kraft C.L."/>
            <person name="Kravitz S."/>
            <person name="Kulp D."/>
            <person name="Lai Z."/>
            <person name="Lasko P."/>
            <person name="Lei Y."/>
            <person name="Levitsky A.A."/>
            <person name="Li J.H."/>
            <person name="Li Z."/>
            <person name="Liang Y."/>
            <person name="Lin X."/>
            <person name="Liu X."/>
            <person name="Mattei B."/>
            <person name="McIntosh T.C."/>
            <person name="McLeod M.P."/>
            <person name="McPherson D."/>
            <person name="Merkulov G."/>
            <person name="Milshina N.V."/>
            <person name="Mobarry C."/>
            <person name="Morris J."/>
            <person name="Moshrefi A."/>
            <person name="Mount S.M."/>
            <person name="Moy M."/>
            <person name="Murphy B."/>
            <person name="Murphy L."/>
            <person name="Muzny D.M."/>
            <person name="Nelson D.L."/>
            <person name="Nelson D.R."/>
            <person name="Nelson K.A."/>
            <person name="Nixon K."/>
            <person name="Nusskern D.R."/>
            <person name="Pacleb J.M."/>
            <person name="Palazzolo M."/>
            <person name="Pittman G.S."/>
            <person name="Pan S."/>
            <person name="Pollard J."/>
            <person name="Puri V."/>
            <person name="Reese M.G."/>
            <person name="Reinert K."/>
            <person name="Remington K."/>
            <person name="Saunders R.D.C."/>
            <person name="Scheeler F."/>
            <person name="Shen H."/>
            <person name="Shue B.C."/>
            <person name="Siden-Kiamos I."/>
            <person name="Simpson M."/>
            <person name="Skupski M.P."/>
            <person name="Smith T.J."/>
            <person name="Spier E."/>
            <person name="Spradling A.C."/>
            <person name="Stapleton M."/>
            <person name="Strong R."/>
            <person name="Sun E."/>
            <person name="Svirskas R."/>
            <person name="Tector C."/>
            <person name="Turner R."/>
            <person name="Venter E."/>
            <person name="Wang A.H."/>
            <person name="Wang X."/>
            <person name="Wang Z.-Y."/>
            <person name="Wassarman D.A."/>
            <person name="Weinstock G.M."/>
            <person name="Weissenbach J."/>
            <person name="Williams S.M."/>
            <person name="Woodage T."/>
            <person name="Worley K.C."/>
            <person name="Wu D."/>
            <person name="Yang S."/>
            <person name="Yao Q.A."/>
            <person name="Ye J."/>
            <person name="Yeh R.-F."/>
            <person name="Zaveri J.S."/>
            <person name="Zhan M."/>
            <person name="Zhang G."/>
            <person name="Zhao Q."/>
            <person name="Zheng L."/>
            <person name="Zheng X.H."/>
            <person name="Zhong F.N."/>
            <person name="Zhong W."/>
            <person name="Zhou X."/>
            <person name="Zhu S.C."/>
            <person name="Zhu X."/>
            <person name="Smith H.O."/>
            <person name="Gibbs R.A."/>
            <person name="Myers E.W."/>
            <person name="Rubin G.M."/>
            <person name="Venter J.C."/>
        </authorList>
    </citation>
    <scope>NUCLEOTIDE SEQUENCE [LARGE SCALE GENOMIC DNA]</scope>
    <source>
        <strain>Berkeley</strain>
    </source>
</reference>
<reference key="3">
    <citation type="journal article" date="2002" name="Genome Biol.">
        <title>Annotation of the Drosophila melanogaster euchromatic genome: a systematic review.</title>
        <authorList>
            <person name="Misra S."/>
            <person name="Crosby M.A."/>
            <person name="Mungall C.J."/>
            <person name="Matthews B.B."/>
            <person name="Campbell K.S."/>
            <person name="Hradecky P."/>
            <person name="Huang Y."/>
            <person name="Kaminker J.S."/>
            <person name="Millburn G.H."/>
            <person name="Prochnik S.E."/>
            <person name="Smith C.D."/>
            <person name="Tupy J.L."/>
            <person name="Whitfield E.J."/>
            <person name="Bayraktaroglu L."/>
            <person name="Berman B.P."/>
            <person name="Bettencourt B.R."/>
            <person name="Celniker S.E."/>
            <person name="de Grey A.D.N.J."/>
            <person name="Drysdale R.A."/>
            <person name="Harris N.L."/>
            <person name="Richter J."/>
            <person name="Russo S."/>
            <person name="Schroeder A.J."/>
            <person name="Shu S.Q."/>
            <person name="Stapleton M."/>
            <person name="Yamada C."/>
            <person name="Ashburner M."/>
            <person name="Gelbart W.M."/>
            <person name="Rubin G.M."/>
            <person name="Lewis S.E."/>
        </authorList>
    </citation>
    <scope>GENOME REANNOTATION</scope>
    <source>
        <strain>Berkeley</strain>
    </source>
</reference>
<reference key="4">
    <citation type="journal article" date="1998" name="Nature">
        <title>HMG-CoA reductase guides migrating primordial germ cells.</title>
        <authorList>
            <person name="Van Doren M."/>
            <person name="Broihier H.T."/>
            <person name="Moore L.A."/>
            <person name="Lehmann R."/>
        </authorList>
    </citation>
    <scope>FUNCTION</scope>
    <scope>TISSUE SPECIFICITY</scope>
</reference>
<gene>
    <name type="primary">Hmgcr</name>
    <name type="synonym">HmG-CoAR</name>
    <name type="ORF">CG10367</name>
</gene>